<organism>
    <name type="scientific">Wigglesworthia glossinidia brevipalpis</name>
    <dbReference type="NCBI Taxonomy" id="36870"/>
    <lineage>
        <taxon>Bacteria</taxon>
        <taxon>Pseudomonadati</taxon>
        <taxon>Pseudomonadota</taxon>
        <taxon>Gammaproteobacteria</taxon>
        <taxon>Enterobacterales</taxon>
        <taxon>Erwiniaceae</taxon>
        <taxon>Wigglesworthia</taxon>
    </lineage>
</organism>
<dbReference type="EMBL" id="BA000021">
    <property type="protein sequence ID" value="BAC24149.1"/>
    <property type="molecule type" value="Genomic_DNA"/>
</dbReference>
<dbReference type="SMR" id="Q8D3J8"/>
<dbReference type="STRING" id="36870.gene:10368481"/>
<dbReference type="KEGG" id="wbr:atpE"/>
<dbReference type="eggNOG" id="ENOG5032S3K">
    <property type="taxonomic scope" value="Bacteria"/>
</dbReference>
<dbReference type="HOGENOM" id="CLU_148047_1_0_6"/>
<dbReference type="OrthoDB" id="9811659at2"/>
<dbReference type="Proteomes" id="UP000000562">
    <property type="component" value="Chromosome"/>
</dbReference>
<dbReference type="GO" id="GO:0005886">
    <property type="term" value="C:plasma membrane"/>
    <property type="evidence" value="ECO:0007669"/>
    <property type="project" value="UniProtKB-SubCell"/>
</dbReference>
<dbReference type="GO" id="GO:0045259">
    <property type="term" value="C:proton-transporting ATP synthase complex"/>
    <property type="evidence" value="ECO:0007669"/>
    <property type="project" value="UniProtKB-KW"/>
</dbReference>
<dbReference type="GO" id="GO:0033177">
    <property type="term" value="C:proton-transporting two-sector ATPase complex, proton-transporting domain"/>
    <property type="evidence" value="ECO:0007669"/>
    <property type="project" value="InterPro"/>
</dbReference>
<dbReference type="GO" id="GO:0008289">
    <property type="term" value="F:lipid binding"/>
    <property type="evidence" value="ECO:0007669"/>
    <property type="project" value="UniProtKB-KW"/>
</dbReference>
<dbReference type="GO" id="GO:0046933">
    <property type="term" value="F:proton-transporting ATP synthase activity, rotational mechanism"/>
    <property type="evidence" value="ECO:0007669"/>
    <property type="project" value="UniProtKB-UniRule"/>
</dbReference>
<dbReference type="CDD" id="cd18185">
    <property type="entry name" value="ATP-synt_Fo_c_ATPE"/>
    <property type="match status" value="1"/>
</dbReference>
<dbReference type="FunFam" id="1.20.20.10:FF:000002">
    <property type="entry name" value="ATP synthase subunit c"/>
    <property type="match status" value="1"/>
</dbReference>
<dbReference type="Gene3D" id="1.20.20.10">
    <property type="entry name" value="F1F0 ATP synthase subunit C"/>
    <property type="match status" value="1"/>
</dbReference>
<dbReference type="HAMAP" id="MF_01396">
    <property type="entry name" value="ATP_synth_c_bact"/>
    <property type="match status" value="1"/>
</dbReference>
<dbReference type="InterPro" id="IPR005953">
    <property type="entry name" value="ATP_synth_csu_bac/chlpt"/>
</dbReference>
<dbReference type="InterPro" id="IPR000454">
    <property type="entry name" value="ATP_synth_F0_csu"/>
</dbReference>
<dbReference type="InterPro" id="IPR020537">
    <property type="entry name" value="ATP_synth_F0_csu_DDCD_BS"/>
</dbReference>
<dbReference type="InterPro" id="IPR038662">
    <property type="entry name" value="ATP_synth_F0_csu_sf"/>
</dbReference>
<dbReference type="InterPro" id="IPR002379">
    <property type="entry name" value="ATPase_proteolipid_c-like_dom"/>
</dbReference>
<dbReference type="InterPro" id="IPR035921">
    <property type="entry name" value="F/V-ATP_Csub_sf"/>
</dbReference>
<dbReference type="NCBIfam" id="TIGR01260">
    <property type="entry name" value="ATP_synt_c"/>
    <property type="match status" value="1"/>
</dbReference>
<dbReference type="NCBIfam" id="NF005363">
    <property type="entry name" value="PRK06876.1"/>
    <property type="match status" value="1"/>
</dbReference>
<dbReference type="Pfam" id="PF00137">
    <property type="entry name" value="ATP-synt_C"/>
    <property type="match status" value="1"/>
</dbReference>
<dbReference type="PRINTS" id="PR00124">
    <property type="entry name" value="ATPASEC"/>
</dbReference>
<dbReference type="SUPFAM" id="SSF81333">
    <property type="entry name" value="F1F0 ATP synthase subunit C"/>
    <property type="match status" value="1"/>
</dbReference>
<dbReference type="PROSITE" id="PS00605">
    <property type="entry name" value="ATPASE_C"/>
    <property type="match status" value="1"/>
</dbReference>
<proteinExistence type="inferred from homology"/>
<name>ATPL_WIGBR</name>
<evidence type="ECO:0000255" key="1">
    <source>
        <dbReference type="HAMAP-Rule" id="MF_01396"/>
    </source>
</evidence>
<feature type="chain" id="PRO_1000184533" description="ATP synthase subunit c">
    <location>
        <begin position="1"/>
        <end position="79"/>
    </location>
</feature>
<feature type="transmembrane region" description="Helical" evidence="1">
    <location>
        <begin position="11"/>
        <end position="31"/>
    </location>
</feature>
<feature type="transmembrane region" description="Helical" evidence="1">
    <location>
        <begin position="55"/>
        <end position="75"/>
    </location>
</feature>
<feature type="site" description="Reversibly protonated during proton transport" evidence="1">
    <location>
        <position position="61"/>
    </location>
</feature>
<sequence>MNSINADLLYISAAIIMGFASIGAAIGIGILGGKFLEGAARQPDLIPTLRTQFFIVMGLVDAIPMISVGLGLYLIFAAS</sequence>
<comment type="function">
    <text evidence="1">F(1)F(0) ATP synthase produces ATP from ADP in the presence of a proton or sodium gradient. F-type ATPases consist of two structural domains, F(1) containing the extramembraneous catalytic core and F(0) containing the membrane proton channel, linked together by a central stalk and a peripheral stalk. During catalysis, ATP synthesis in the catalytic domain of F(1) is coupled via a rotary mechanism of the central stalk subunits to proton translocation.</text>
</comment>
<comment type="function">
    <text evidence="1">Key component of the F(0) channel; it plays a direct role in translocation across the membrane. A homomeric c-ring of between 10-14 subunits forms the central stalk rotor element with the F(1) delta and epsilon subunits.</text>
</comment>
<comment type="subunit">
    <text evidence="1">F-type ATPases have 2 components, F(1) - the catalytic core - and F(0) - the membrane proton channel. F(1) has five subunits: alpha(3), beta(3), gamma(1), delta(1), epsilon(1). F(0) has three main subunits: a(1), b(2) and c(10-14). The alpha and beta chains form an alternating ring which encloses part of the gamma chain. F(1) is attached to F(0) by a central stalk formed by the gamma and epsilon chains, while a peripheral stalk is formed by the delta and b chains.</text>
</comment>
<comment type="subcellular location">
    <subcellularLocation>
        <location evidence="1">Cell membrane</location>
        <topology evidence="1">Multi-pass membrane protein</topology>
    </subcellularLocation>
</comment>
<comment type="similarity">
    <text evidence="1">Belongs to the ATPase C chain family.</text>
</comment>
<accession>Q8D3J8</accession>
<gene>
    <name evidence="1" type="primary">atpE</name>
    <name type="ordered locus">WIGBR0030</name>
</gene>
<reference key="1">
    <citation type="journal article" date="2002" name="Nat. Genet.">
        <title>Genome sequence of the endocellular obligate symbiont of tsetse flies, Wigglesworthia glossinidia.</title>
        <authorList>
            <person name="Akman L."/>
            <person name="Yamashita A."/>
            <person name="Watanabe H."/>
            <person name="Oshima K."/>
            <person name="Shiba T."/>
            <person name="Hattori M."/>
            <person name="Aksoy S."/>
        </authorList>
    </citation>
    <scope>NUCLEOTIDE SEQUENCE [LARGE SCALE GENOMIC DNA]</scope>
</reference>
<protein>
    <recommendedName>
        <fullName evidence="1">ATP synthase subunit c</fullName>
    </recommendedName>
    <alternativeName>
        <fullName evidence="1">ATP synthase F(0) sector subunit c</fullName>
    </alternativeName>
    <alternativeName>
        <fullName evidence="1">F-type ATPase subunit c</fullName>
        <shortName evidence="1">F-ATPase subunit c</shortName>
    </alternativeName>
    <alternativeName>
        <fullName evidence="1">Lipid-binding protein</fullName>
    </alternativeName>
</protein>
<keyword id="KW-0066">ATP synthesis</keyword>
<keyword id="KW-1003">Cell membrane</keyword>
<keyword id="KW-0138">CF(0)</keyword>
<keyword id="KW-0375">Hydrogen ion transport</keyword>
<keyword id="KW-0406">Ion transport</keyword>
<keyword id="KW-0446">Lipid-binding</keyword>
<keyword id="KW-0472">Membrane</keyword>
<keyword id="KW-1185">Reference proteome</keyword>
<keyword id="KW-0812">Transmembrane</keyword>
<keyword id="KW-1133">Transmembrane helix</keyword>
<keyword id="KW-0813">Transport</keyword>